<reference key="1">
    <citation type="submission" date="2005-10" db="EMBL/GenBank/DDBJ databases">
        <title>NISC comparative sequencing initiative.</title>
        <authorList>
            <person name="Antonellis A."/>
            <person name="Ayele K."/>
            <person name="Benjamin B."/>
            <person name="Blakesley R.W."/>
            <person name="Boakye A."/>
            <person name="Bouffard G.G."/>
            <person name="Brinkley C."/>
            <person name="Brooks S."/>
            <person name="Chu G."/>
            <person name="Coleman H."/>
            <person name="Engle J."/>
            <person name="Gestole M."/>
            <person name="Greene A."/>
            <person name="Guan X."/>
            <person name="Gupta J."/>
            <person name="Haghighi P."/>
            <person name="Han J."/>
            <person name="Hansen N."/>
            <person name="Ho S.-L."/>
            <person name="Hu P."/>
            <person name="Hunter G."/>
            <person name="Hurle B."/>
            <person name="Idol J.R."/>
            <person name="Kwong P."/>
            <person name="Laric P."/>
            <person name="Larson S."/>
            <person name="Lee-Lin S.-Q."/>
            <person name="Legaspi R."/>
            <person name="Madden M."/>
            <person name="Maduro Q.L."/>
            <person name="Maduro V.B."/>
            <person name="Margulies E.H."/>
            <person name="Masiello C."/>
            <person name="Maskeri B."/>
            <person name="McDowell J."/>
            <person name="Mojidi H.A."/>
            <person name="Mullikin J.C."/>
            <person name="Oestreicher J.S."/>
            <person name="Park M."/>
            <person name="Portnoy M.E."/>
            <person name="Prasad A."/>
            <person name="Puri O."/>
            <person name="Reddix-Dugue N."/>
            <person name="Schandler K."/>
            <person name="Schueler M.G."/>
            <person name="Sison C."/>
            <person name="Stantripop S."/>
            <person name="Stephen E."/>
            <person name="Taye A."/>
            <person name="Thomas J.W."/>
            <person name="Thomas P.J."/>
            <person name="Tsipouri V."/>
            <person name="Ung L."/>
            <person name="Vogt J.L."/>
            <person name="Wetherby K.D."/>
            <person name="Young A."/>
            <person name="Green E.D."/>
        </authorList>
    </citation>
    <scope>NUCLEOTIDE SEQUENCE [LARGE SCALE GENOMIC DNA]</scope>
</reference>
<accession>B0KWT6</accession>
<comment type="function">
    <text evidence="1">As part of a cytosolic protein quality control complex, the BAG6/BAT3 complex, maintains misfolded and hydrophobic patches-containing proteins in a soluble state and participates in their proper delivery to the endoplasmic reticulum or alternatively can promote their sorting to the proteasome where they undergo degradation. The BAG6/BAT3 complex is involved in the post-translational delivery of tail-anchored/type II transmembrane proteins to the endoplasmic reticulum membrane. Recruited to ribosomes, it interacts with the transmembrane region of newly synthesized tail-anchored proteins and together with SGTA and ASNA1 mediates their delivery to the endoplasmic reticulum. Client proteins that cannot be properly delivered to the endoplasmic reticulum are ubiquitinated and sorted to the proteasome. Similarly, the BAG6/BAT3 complex also functions as a sorting platform for proteins of the secretory pathway that are mislocalized to the cytosol either delivering them to the proteasome for degradation or to the endoplasmic reticulum. The BAG6/BAT3 complex also plays a role in the endoplasmic reticulum-associated degradation (ERAD), a quality control mechanism that eliminates unwanted proteins of the endoplasmic reticulum through their retrotranslocation to the cytosol and their targeting to the proteasome. It maintains these retrotranslocated proteins in an unfolded yet soluble state condition in the cytosol to ensure their proper delivery to the proteasome.</text>
</comment>
<comment type="subunit">
    <text evidence="1">Component of the BAG6/BAT3 complex, at least composed of BAG6, UBL4A and GET4/TRC35. Interacts with BAG6; the interaction is direct and required for UBL4A protein stability. Interacts with USP13; may be indirect via BAG6.</text>
</comment>
<comment type="subcellular location">
    <subcellularLocation>
        <location evidence="1">Cytoplasm</location>
        <location evidence="1">Cytosol</location>
    </subcellularLocation>
    <subcellularLocation>
        <location evidence="1">Nucleus</location>
    </subcellularLocation>
</comment>
<comment type="PTM">
    <text evidence="1">Polyubiquitinated. Ubiquitination by AMFR and deubiquitination by USP13 may regulate the interaction between the BAG6/BAT complex and SGTA and therefore may regulate client proteins fate.</text>
</comment>
<proteinExistence type="inferred from homology"/>
<protein>
    <recommendedName>
        <fullName>Ubiquitin-like protein 4A</fullName>
    </recommendedName>
</protein>
<name>UBL4A_CALJA</name>
<feature type="chain" id="PRO_0000403736" description="Ubiquitin-like protein 4A">
    <location>
        <begin position="1"/>
        <end position="157"/>
    </location>
</feature>
<feature type="domain" description="Ubiquitin-like" evidence="2">
    <location>
        <begin position="1"/>
        <end position="76"/>
    </location>
</feature>
<feature type="region of interest" description="Required and sufficient for interaction with BAG6" evidence="1">
    <location>
        <begin position="96"/>
        <end position="138"/>
    </location>
</feature>
<feature type="modified residue" description="Phosphoserine" evidence="1">
    <location>
        <position position="90"/>
    </location>
</feature>
<feature type="cross-link" description="Glycyl lysine isopeptide (Lys-Gly) (interchain with G-Cter in ubiquitin)" evidence="1">
    <location>
        <position position="48"/>
    </location>
</feature>
<evidence type="ECO:0000250" key="1">
    <source>
        <dbReference type="UniProtKB" id="P11441"/>
    </source>
</evidence>
<evidence type="ECO:0000255" key="2">
    <source>
        <dbReference type="PROSITE-ProRule" id="PRU00214"/>
    </source>
</evidence>
<organism>
    <name type="scientific">Callithrix jacchus</name>
    <name type="common">White-tufted-ear marmoset</name>
    <dbReference type="NCBI Taxonomy" id="9483"/>
    <lineage>
        <taxon>Eukaryota</taxon>
        <taxon>Metazoa</taxon>
        <taxon>Chordata</taxon>
        <taxon>Craniata</taxon>
        <taxon>Vertebrata</taxon>
        <taxon>Euteleostomi</taxon>
        <taxon>Mammalia</taxon>
        <taxon>Eutheria</taxon>
        <taxon>Euarchontoglires</taxon>
        <taxon>Primates</taxon>
        <taxon>Haplorrhini</taxon>
        <taxon>Platyrrhini</taxon>
        <taxon>Cebidae</taxon>
        <taxon>Callitrichinae</taxon>
        <taxon>Callithrix</taxon>
        <taxon>Callithrix</taxon>
    </lineage>
</organism>
<sequence length="157" mass="17718">MQLTVKALQGRDCSLQVPEDELVSTLKQLVSEKLNVPVRQQRLLFKGKALADGKRLSDYSIGPNSKLNLVVKPLEKVLLEEGTGRRLADSPPPQVWQLISKVLARHFSAADASRVLEQLQRDYERSLSRLTLDDIERLAGRFLHPEVTETMEKGFSK</sequence>
<keyword id="KW-0963">Cytoplasm</keyword>
<keyword id="KW-1017">Isopeptide bond</keyword>
<keyword id="KW-0539">Nucleus</keyword>
<keyword id="KW-0597">Phosphoprotein</keyword>
<keyword id="KW-1185">Reference proteome</keyword>
<keyword id="KW-0813">Transport</keyword>
<keyword id="KW-0832">Ubl conjugation</keyword>
<dbReference type="EMBL" id="DP000587">
    <property type="protein sequence ID" value="ABZ10495.1"/>
    <property type="molecule type" value="Genomic_DNA"/>
</dbReference>
<dbReference type="RefSeq" id="XP_002763467.1">
    <property type="nucleotide sequence ID" value="XM_002763421.5"/>
</dbReference>
<dbReference type="BMRB" id="B0KWT6"/>
<dbReference type="SMR" id="B0KWT6"/>
<dbReference type="FunCoup" id="B0KWT6">
    <property type="interactions" value="2178"/>
</dbReference>
<dbReference type="STRING" id="9483.ENSCJAP00000030923"/>
<dbReference type="Ensembl" id="ENSCJAT00000123721.1">
    <property type="protein sequence ID" value="ENSCJAP00000084486.1"/>
    <property type="gene ID" value="ENSCJAG00000074416.1"/>
</dbReference>
<dbReference type="GeneID" id="100387252"/>
<dbReference type="KEGG" id="cjc:100387252"/>
<dbReference type="CTD" id="8266"/>
<dbReference type="eggNOG" id="KOG0001">
    <property type="taxonomic scope" value="Eukaryota"/>
</dbReference>
<dbReference type="GeneTree" id="ENSGT00730000111022"/>
<dbReference type="HOGENOM" id="CLU_119809_0_0_1"/>
<dbReference type="InParanoid" id="B0KWT6"/>
<dbReference type="OMA" id="SMDTSYM"/>
<dbReference type="OrthoDB" id="417450at2759"/>
<dbReference type="Proteomes" id="UP000008225">
    <property type="component" value="Chromosome X"/>
</dbReference>
<dbReference type="Bgee" id="ENSCJAG00000016805">
    <property type="expression patterns" value="Expressed in frontal cortex and 6 other cell types or tissues"/>
</dbReference>
<dbReference type="GO" id="GO:0071818">
    <property type="term" value="C:BAT3 complex"/>
    <property type="evidence" value="ECO:0000250"/>
    <property type="project" value="UniProtKB"/>
</dbReference>
<dbReference type="GO" id="GO:0005829">
    <property type="term" value="C:cytosol"/>
    <property type="evidence" value="ECO:0000250"/>
    <property type="project" value="UniProtKB"/>
</dbReference>
<dbReference type="GO" id="GO:0016020">
    <property type="term" value="C:membrane"/>
    <property type="evidence" value="ECO:0007669"/>
    <property type="project" value="Ensembl"/>
</dbReference>
<dbReference type="GO" id="GO:0005654">
    <property type="term" value="C:nucleoplasm"/>
    <property type="evidence" value="ECO:0007669"/>
    <property type="project" value="Ensembl"/>
</dbReference>
<dbReference type="GO" id="GO:0051087">
    <property type="term" value="F:protein-folding chaperone binding"/>
    <property type="evidence" value="ECO:0007669"/>
    <property type="project" value="Ensembl"/>
</dbReference>
<dbReference type="GO" id="GO:0006620">
    <property type="term" value="P:post-translational protein targeting to endoplasmic reticulum membrane"/>
    <property type="evidence" value="ECO:0007669"/>
    <property type="project" value="Ensembl"/>
</dbReference>
<dbReference type="GO" id="GO:0031647">
    <property type="term" value="P:regulation of protein stability"/>
    <property type="evidence" value="ECO:0007669"/>
    <property type="project" value="Ensembl"/>
</dbReference>
<dbReference type="GO" id="GO:0071816">
    <property type="term" value="P:tail-anchored membrane protein insertion into ER membrane"/>
    <property type="evidence" value="ECO:0000250"/>
    <property type="project" value="UniProtKB"/>
</dbReference>
<dbReference type="GO" id="GO:0006511">
    <property type="term" value="P:ubiquitin-dependent protein catabolic process"/>
    <property type="evidence" value="ECO:0007669"/>
    <property type="project" value="Ensembl"/>
</dbReference>
<dbReference type="CDD" id="cd01807">
    <property type="entry name" value="Ubl_UBL4A_like"/>
    <property type="match status" value="1"/>
</dbReference>
<dbReference type="FunFam" id="3.10.20.90:FF:000144">
    <property type="entry name" value="Ubiquitin-like protein 4A"/>
    <property type="match status" value="1"/>
</dbReference>
<dbReference type="Gene3D" id="3.10.20.90">
    <property type="entry name" value="Phosphatidylinositol 3-kinase Catalytic Subunit, Chain A, domain 1"/>
    <property type="match status" value="1"/>
</dbReference>
<dbReference type="InterPro" id="IPR000626">
    <property type="entry name" value="Ubiquitin-like_dom"/>
</dbReference>
<dbReference type="InterPro" id="IPR029071">
    <property type="entry name" value="Ubiquitin-like_domsf"/>
</dbReference>
<dbReference type="InterPro" id="IPR019954">
    <property type="entry name" value="Ubiquitin_CS"/>
</dbReference>
<dbReference type="InterPro" id="IPR019956">
    <property type="entry name" value="Ubiquitin_dom"/>
</dbReference>
<dbReference type="InterPro" id="IPR041421">
    <property type="entry name" value="Ubl4_C_TUGS"/>
</dbReference>
<dbReference type="InterPro" id="IPR047154">
    <property type="entry name" value="UBL4A-like"/>
</dbReference>
<dbReference type="InterPro" id="IPR044724">
    <property type="entry name" value="Ubl_UBL4A-like"/>
</dbReference>
<dbReference type="PANTHER" id="PTHR46555">
    <property type="entry name" value="UBIQUITIN-LIKE PROTEIN 4A"/>
    <property type="match status" value="1"/>
</dbReference>
<dbReference type="PANTHER" id="PTHR46555:SF1">
    <property type="entry name" value="UBIQUITIN-LIKE PROTEIN 4A"/>
    <property type="match status" value="1"/>
</dbReference>
<dbReference type="Pfam" id="PF17840">
    <property type="entry name" value="Tugs"/>
    <property type="match status" value="1"/>
</dbReference>
<dbReference type="Pfam" id="PF00240">
    <property type="entry name" value="ubiquitin"/>
    <property type="match status" value="1"/>
</dbReference>
<dbReference type="PRINTS" id="PR00348">
    <property type="entry name" value="UBIQUITIN"/>
</dbReference>
<dbReference type="SMART" id="SM00213">
    <property type="entry name" value="UBQ"/>
    <property type="match status" value="1"/>
</dbReference>
<dbReference type="SUPFAM" id="SSF54236">
    <property type="entry name" value="Ubiquitin-like"/>
    <property type="match status" value="1"/>
</dbReference>
<dbReference type="PROSITE" id="PS00299">
    <property type="entry name" value="UBIQUITIN_1"/>
    <property type="match status" value="1"/>
</dbReference>
<dbReference type="PROSITE" id="PS50053">
    <property type="entry name" value="UBIQUITIN_2"/>
    <property type="match status" value="1"/>
</dbReference>
<gene>
    <name type="primary">UBL4A</name>
</gene>